<keyword id="KW-0067">ATP-binding</keyword>
<keyword id="KW-0997">Cell inner membrane</keyword>
<keyword id="KW-1003">Cell membrane</keyword>
<keyword id="KW-0472">Membrane</keyword>
<keyword id="KW-0547">Nucleotide-binding</keyword>
<keyword id="KW-0677">Repeat</keyword>
<keyword id="KW-0762">Sugar transport</keyword>
<keyword id="KW-1278">Translocase</keyword>
<keyword id="KW-0813">Transport</keyword>
<comment type="function">
    <text evidence="1">Part of the ABC transporter complex XylFGH involved in xylose import. Responsible for energy coupling to the transport system.</text>
</comment>
<comment type="catalytic activity">
    <reaction evidence="1">
        <text>D-xylose(out) + ATP + H2O = D-xylose(in) + ADP + phosphate + H(+)</text>
        <dbReference type="Rhea" id="RHEA:29899"/>
        <dbReference type="ChEBI" id="CHEBI:15377"/>
        <dbReference type="ChEBI" id="CHEBI:15378"/>
        <dbReference type="ChEBI" id="CHEBI:30616"/>
        <dbReference type="ChEBI" id="CHEBI:43474"/>
        <dbReference type="ChEBI" id="CHEBI:53455"/>
        <dbReference type="ChEBI" id="CHEBI:456216"/>
        <dbReference type="EC" id="7.5.2.10"/>
    </reaction>
</comment>
<comment type="subunit">
    <text evidence="1">The complex is composed of two ATP-binding proteins (XylG), two transmembrane proteins (XylH) and a solute-binding protein (XylF).</text>
</comment>
<comment type="subcellular location">
    <subcellularLocation>
        <location evidence="1">Cell inner membrane</location>
        <topology evidence="1">Peripheral membrane protein</topology>
    </subcellularLocation>
</comment>
<comment type="similarity">
    <text evidence="1">Belongs to the ABC transporter superfamily. Xylose importer (TC 3.A.1.2.4) family.</text>
</comment>
<gene>
    <name evidence="1" type="primary">xylG</name>
    <name type="ordered locus">BRA1151</name>
    <name type="ordered locus">BS1330_II1142</name>
</gene>
<evidence type="ECO:0000255" key="1">
    <source>
        <dbReference type="HAMAP-Rule" id="MF_01722"/>
    </source>
</evidence>
<accession>Q8FUR8</accession>
<accession>G0KEE8</accession>
<organism>
    <name type="scientific">Brucella suis biovar 1 (strain 1330)</name>
    <dbReference type="NCBI Taxonomy" id="204722"/>
    <lineage>
        <taxon>Bacteria</taxon>
        <taxon>Pseudomonadati</taxon>
        <taxon>Pseudomonadota</taxon>
        <taxon>Alphaproteobacteria</taxon>
        <taxon>Hyphomicrobiales</taxon>
        <taxon>Brucellaceae</taxon>
        <taxon>Brucella/Ochrobactrum group</taxon>
        <taxon>Brucella</taxon>
    </lineage>
</organism>
<proteinExistence type="inferred from homology"/>
<sequence length="511" mass="55851">MSEYLLEMRNIGKEFNGVKALDGIYLKVRAGECVELCGENGAGKSTLMKVPSGVYPHGTWTGEIFWEGKELKASGIRDTEAAGIVIIHQELMMVPHLSVAENIFLGCEPTTGGFIDYDQMNARAAELLARLKINDINVALPVYHYSGGKQQLIEIAKAINKNAKLLILDEPTSALTASETRVLIDLIKDFKKQGMACVYISHKLDEVAEISDTVTVIRDGAHIATRPMSELTTPDIITMMVGREMKNLFPREPHDIGEVMFEARNISCWDVTNPGRKVVDDVSFALRRGEILGIAGLVGAGRTELVSSLFGVWPGACQGQVFLEGKEIKIRTPRDAVRQGICMVPEDHKRDGILPIMPVGHNMTISVLDRFSLRGLIDKDAELVAIQREILRLKVKTADPMLAIASLSGGNQQKAVLSKMMLPDPKVLILDEPTRGVDVGAKYEIYKLIFALARQGVSILMVSSEMPEVLGISDRVLVIGEGKLRGDFPNENLTQEKVLAAAIGKPATNAA</sequence>
<protein>
    <recommendedName>
        <fullName evidence="1">Xylose import ATP-binding protein XylG</fullName>
        <ecNumber evidence="1">7.5.2.10</ecNumber>
    </recommendedName>
</protein>
<feature type="chain" id="PRO_0000271496" description="Xylose import ATP-binding protein XylG">
    <location>
        <begin position="1"/>
        <end position="511"/>
    </location>
</feature>
<feature type="domain" description="ABC transporter 1" evidence="1">
    <location>
        <begin position="6"/>
        <end position="244"/>
    </location>
</feature>
<feature type="domain" description="ABC transporter 2" evidence="1">
    <location>
        <begin position="261"/>
        <end position="506"/>
    </location>
</feature>
<feature type="binding site" evidence="1">
    <location>
        <begin position="38"/>
        <end position="45"/>
    </location>
    <ligand>
        <name>ATP</name>
        <dbReference type="ChEBI" id="CHEBI:30616"/>
    </ligand>
</feature>
<reference key="1">
    <citation type="journal article" date="2002" name="Proc. Natl. Acad. Sci. U.S.A.">
        <title>The Brucella suis genome reveals fundamental similarities between animal and plant pathogens and symbionts.</title>
        <authorList>
            <person name="Paulsen I.T."/>
            <person name="Seshadri R."/>
            <person name="Nelson K.E."/>
            <person name="Eisen J.A."/>
            <person name="Heidelberg J.F."/>
            <person name="Read T.D."/>
            <person name="Dodson R.J."/>
            <person name="Umayam L.A."/>
            <person name="Brinkac L.M."/>
            <person name="Beanan M.J."/>
            <person name="Daugherty S.C."/>
            <person name="DeBoy R.T."/>
            <person name="Durkin A.S."/>
            <person name="Kolonay J.F."/>
            <person name="Madupu R."/>
            <person name="Nelson W.C."/>
            <person name="Ayodeji B."/>
            <person name="Kraul M."/>
            <person name="Shetty J."/>
            <person name="Malek J.A."/>
            <person name="Van Aken S.E."/>
            <person name="Riedmuller S."/>
            <person name="Tettelin H."/>
            <person name="Gill S.R."/>
            <person name="White O."/>
            <person name="Salzberg S.L."/>
            <person name="Hoover D.L."/>
            <person name="Lindler L.E."/>
            <person name="Halling S.M."/>
            <person name="Boyle S.M."/>
            <person name="Fraser C.M."/>
        </authorList>
    </citation>
    <scope>NUCLEOTIDE SEQUENCE [LARGE SCALE GENOMIC DNA]</scope>
    <source>
        <strain>1330</strain>
    </source>
</reference>
<reference key="2">
    <citation type="journal article" date="2011" name="J. Bacteriol.">
        <title>Revised genome sequence of Brucella suis 1330.</title>
        <authorList>
            <person name="Tae H."/>
            <person name="Shallom S."/>
            <person name="Settlage R."/>
            <person name="Preston D."/>
            <person name="Adams L.G."/>
            <person name="Garner H.R."/>
        </authorList>
    </citation>
    <scope>NUCLEOTIDE SEQUENCE [LARGE SCALE GENOMIC DNA]</scope>
    <source>
        <strain>1330</strain>
    </source>
</reference>
<dbReference type="EC" id="7.5.2.10" evidence="1"/>
<dbReference type="EMBL" id="AE014292">
    <property type="protein sequence ID" value="AAN34310.1"/>
    <property type="molecule type" value="Genomic_DNA"/>
</dbReference>
<dbReference type="EMBL" id="CP002998">
    <property type="protein sequence ID" value="AEM20586.1"/>
    <property type="molecule type" value="Genomic_DNA"/>
</dbReference>
<dbReference type="RefSeq" id="WP_006191509.1">
    <property type="nucleotide sequence ID" value="NZ_KN046805.1"/>
</dbReference>
<dbReference type="SMR" id="Q8FUR8"/>
<dbReference type="GeneID" id="45054134"/>
<dbReference type="KEGG" id="bms:BRA1151"/>
<dbReference type="KEGG" id="bsi:BS1330_II1142"/>
<dbReference type="PATRIC" id="fig|204722.21.peg.239"/>
<dbReference type="HOGENOM" id="CLU_000604_92_3_5"/>
<dbReference type="PhylomeDB" id="Q8FUR8"/>
<dbReference type="Proteomes" id="UP000007104">
    <property type="component" value="Chromosome II"/>
</dbReference>
<dbReference type="GO" id="GO:0005886">
    <property type="term" value="C:plasma membrane"/>
    <property type="evidence" value="ECO:0007669"/>
    <property type="project" value="UniProtKB-SubCell"/>
</dbReference>
<dbReference type="GO" id="GO:0015614">
    <property type="term" value="F:ABC-type D-xylose transporter activity"/>
    <property type="evidence" value="ECO:0007669"/>
    <property type="project" value="UniProtKB-EC"/>
</dbReference>
<dbReference type="GO" id="GO:0005524">
    <property type="term" value="F:ATP binding"/>
    <property type="evidence" value="ECO:0007669"/>
    <property type="project" value="UniProtKB-KW"/>
</dbReference>
<dbReference type="GO" id="GO:0016887">
    <property type="term" value="F:ATP hydrolysis activity"/>
    <property type="evidence" value="ECO:0007669"/>
    <property type="project" value="InterPro"/>
</dbReference>
<dbReference type="CDD" id="cd03216">
    <property type="entry name" value="ABC_Carb_Monos_I"/>
    <property type="match status" value="1"/>
</dbReference>
<dbReference type="CDD" id="cd03215">
    <property type="entry name" value="ABC_Carb_Monos_II"/>
    <property type="match status" value="1"/>
</dbReference>
<dbReference type="FunFam" id="3.40.50.300:FF:000126">
    <property type="entry name" value="Galactose/methyl galactoside import ATP-binding protein MglA"/>
    <property type="match status" value="1"/>
</dbReference>
<dbReference type="FunFam" id="3.40.50.300:FF:000127">
    <property type="entry name" value="Ribose import ATP-binding protein RbsA"/>
    <property type="match status" value="1"/>
</dbReference>
<dbReference type="Gene3D" id="3.40.50.300">
    <property type="entry name" value="P-loop containing nucleotide triphosphate hydrolases"/>
    <property type="match status" value="2"/>
</dbReference>
<dbReference type="InterPro" id="IPR003593">
    <property type="entry name" value="AAA+_ATPase"/>
</dbReference>
<dbReference type="InterPro" id="IPR050107">
    <property type="entry name" value="ABC_carbohydrate_import_ATPase"/>
</dbReference>
<dbReference type="InterPro" id="IPR003439">
    <property type="entry name" value="ABC_transporter-like_ATP-bd"/>
</dbReference>
<dbReference type="InterPro" id="IPR017871">
    <property type="entry name" value="ABC_transporter-like_CS"/>
</dbReference>
<dbReference type="InterPro" id="IPR013455">
    <property type="entry name" value="ABC_transptr_XylG"/>
</dbReference>
<dbReference type="InterPro" id="IPR027417">
    <property type="entry name" value="P-loop_NTPase"/>
</dbReference>
<dbReference type="NCBIfam" id="NF010069">
    <property type="entry name" value="PRK13549.1"/>
    <property type="match status" value="1"/>
</dbReference>
<dbReference type="NCBIfam" id="TIGR02633">
    <property type="entry name" value="xylG"/>
    <property type="match status" value="1"/>
</dbReference>
<dbReference type="PANTHER" id="PTHR43790">
    <property type="entry name" value="CARBOHYDRATE TRANSPORT ATP-BINDING PROTEIN MG119-RELATED"/>
    <property type="match status" value="1"/>
</dbReference>
<dbReference type="PANTHER" id="PTHR43790:SF1">
    <property type="entry name" value="XYLOSE IMPORT ATP-BINDING PROTEIN XYLG"/>
    <property type="match status" value="1"/>
</dbReference>
<dbReference type="Pfam" id="PF00005">
    <property type="entry name" value="ABC_tran"/>
    <property type="match status" value="2"/>
</dbReference>
<dbReference type="SMART" id="SM00382">
    <property type="entry name" value="AAA"/>
    <property type="match status" value="2"/>
</dbReference>
<dbReference type="SUPFAM" id="SSF52540">
    <property type="entry name" value="P-loop containing nucleoside triphosphate hydrolases"/>
    <property type="match status" value="2"/>
</dbReference>
<dbReference type="PROSITE" id="PS00211">
    <property type="entry name" value="ABC_TRANSPORTER_1"/>
    <property type="match status" value="1"/>
</dbReference>
<dbReference type="PROSITE" id="PS50893">
    <property type="entry name" value="ABC_TRANSPORTER_2"/>
    <property type="match status" value="2"/>
</dbReference>
<dbReference type="PROSITE" id="PS51280">
    <property type="entry name" value="XYLG"/>
    <property type="match status" value="1"/>
</dbReference>
<name>XYLG_BRUSU</name>